<dbReference type="EC" id="2.1.1.-"/>
<dbReference type="EMBL" id="LT708304">
    <property type="protein sequence ID" value="SIT98717.1"/>
    <property type="molecule type" value="Genomic_DNA"/>
</dbReference>
<dbReference type="RefSeq" id="NP_853894.1">
    <property type="nucleotide sequence ID" value="NC_002945.3"/>
</dbReference>
<dbReference type="RefSeq" id="WP_010950364.1">
    <property type="nucleotide sequence ID" value="NC_002945.4"/>
</dbReference>
<dbReference type="SMR" id="Q7U2J0"/>
<dbReference type="PATRIC" id="fig|233413.5.peg.255"/>
<dbReference type="Proteomes" id="UP000001419">
    <property type="component" value="Chromosome"/>
</dbReference>
<dbReference type="GO" id="GO:0008757">
    <property type="term" value="F:S-adenosylmethionine-dependent methyltransferase activity"/>
    <property type="evidence" value="ECO:0007669"/>
    <property type="project" value="InterPro"/>
</dbReference>
<dbReference type="GO" id="GO:0032259">
    <property type="term" value="P:methylation"/>
    <property type="evidence" value="ECO:0007669"/>
    <property type="project" value="UniProtKB-KW"/>
</dbReference>
<dbReference type="CDD" id="cd02440">
    <property type="entry name" value="AdoMet_MTases"/>
    <property type="match status" value="1"/>
</dbReference>
<dbReference type="Gene3D" id="3.40.50.150">
    <property type="entry name" value="Vaccinia Virus protein VP39"/>
    <property type="match status" value="1"/>
</dbReference>
<dbReference type="InterPro" id="IPR013216">
    <property type="entry name" value="Methyltransf_11"/>
</dbReference>
<dbReference type="InterPro" id="IPR029063">
    <property type="entry name" value="SAM-dependent_MTases_sf"/>
</dbReference>
<dbReference type="PANTHER" id="PTHR43591:SF24">
    <property type="entry name" value="2-METHOXY-6-POLYPRENYL-1,4-BENZOQUINOL METHYLASE, MITOCHONDRIAL"/>
    <property type="match status" value="1"/>
</dbReference>
<dbReference type="PANTHER" id="PTHR43591">
    <property type="entry name" value="METHYLTRANSFERASE"/>
    <property type="match status" value="1"/>
</dbReference>
<dbReference type="Pfam" id="PF08241">
    <property type="entry name" value="Methyltransf_11"/>
    <property type="match status" value="1"/>
</dbReference>
<dbReference type="SUPFAM" id="SSF53335">
    <property type="entry name" value="S-adenosyl-L-methionine-dependent methyltransferases"/>
    <property type="match status" value="1"/>
</dbReference>
<reference key="1">
    <citation type="journal article" date="2003" name="Proc. Natl. Acad. Sci. U.S.A.">
        <title>The complete genome sequence of Mycobacterium bovis.</title>
        <authorList>
            <person name="Garnier T."/>
            <person name="Eiglmeier K."/>
            <person name="Camus J.-C."/>
            <person name="Medina N."/>
            <person name="Mansoor H."/>
            <person name="Pryor M."/>
            <person name="Duthoy S."/>
            <person name="Grondin S."/>
            <person name="Lacroix C."/>
            <person name="Monsempe C."/>
            <person name="Simon S."/>
            <person name="Harris B."/>
            <person name="Atkin R."/>
            <person name="Doggett J."/>
            <person name="Mayes R."/>
            <person name="Keating L."/>
            <person name="Wheeler P.R."/>
            <person name="Parkhill J."/>
            <person name="Barrell B.G."/>
            <person name="Cole S.T."/>
            <person name="Gordon S.V."/>
            <person name="Hewinson R.G."/>
        </authorList>
    </citation>
    <scope>NUCLEOTIDE SEQUENCE [LARGE SCALE GENOMIC DNA]</scope>
    <source>
        <strain>ATCC BAA-935 / AF2122/97</strain>
    </source>
</reference>
<reference key="2">
    <citation type="journal article" date="2017" name="Genome Announc.">
        <title>Updated reference genome sequence and annotation of Mycobacterium bovis AF2122/97.</title>
        <authorList>
            <person name="Malone K.M."/>
            <person name="Farrell D."/>
            <person name="Stuber T.P."/>
            <person name="Schubert O.T."/>
            <person name="Aebersold R."/>
            <person name="Robbe-Austerman S."/>
            <person name="Gordon S.V."/>
        </authorList>
    </citation>
    <scope>NUCLEOTIDE SEQUENCE [LARGE SCALE GENOMIC DNA]</scope>
    <scope>GENOME REANNOTATION</scope>
    <source>
        <strain>ATCC BAA-935 / AF2122/97</strain>
    </source>
</reference>
<reference key="3">
    <citation type="journal article" date="2005" name="FEMS Microbiol. Lett.">
        <title>Thiol specific oxidative stress response in Mycobacteria.</title>
        <authorList>
            <person name="Dosanjh N.S."/>
            <person name="Rawat M."/>
            <person name="Chung J.-H."/>
            <person name="Av-Gay Y."/>
        </authorList>
    </citation>
    <scope>IDENTIFICATION BY MASS SPECTROMETRY</scope>
    <scope>INDUCTION</scope>
    <source>
        <strain>BCG / Pasteur</strain>
    </source>
</reference>
<comment type="induction">
    <text evidence="1">Induced in response to the thiol oxidant diamide.</text>
</comment>
<comment type="similarity">
    <text evidence="2">Belongs to the methyltransferase superfamily.</text>
</comment>
<gene>
    <name type="ordered locus">BQ2027_MB0229C</name>
</gene>
<proteinExistence type="evidence at protein level"/>
<keyword id="KW-0489">Methyltransferase</keyword>
<keyword id="KW-1185">Reference proteome</keyword>
<keyword id="KW-0808">Transferase</keyword>
<name>Y229_MYCBO</name>
<organism>
    <name type="scientific">Mycobacterium bovis (strain ATCC BAA-935 / AF2122/97)</name>
    <dbReference type="NCBI Taxonomy" id="233413"/>
    <lineage>
        <taxon>Bacteria</taxon>
        <taxon>Bacillati</taxon>
        <taxon>Actinomycetota</taxon>
        <taxon>Actinomycetes</taxon>
        <taxon>Mycobacteriales</taxon>
        <taxon>Mycobacteriaceae</taxon>
        <taxon>Mycobacterium</taxon>
        <taxon>Mycobacterium tuberculosis complex</taxon>
    </lineage>
</organism>
<sequence length="254" mass="27476">MAVTDVFARRATLRRSLRLLADFRYEQRDPARFYRTLAADTAAMIGDLWLATHSEPPVGRTLLDVGGGPGYFATAFSDAGVGYIGVEPDPDEMHAAGPAFTGRPGMFVRASGMALPLADDSVDICLSSNVAEHVPRPWQLGTEMLRVTKPGGLVVLSYTVWLGPFGGHEMGLSHYLGGARAAARYVRKHGHPAKNNYGSSLFAVSAAEGLRWAAGTGAALAVFPRYHPRWAWWLTSVPVLREFLVSNLVLVLTP</sequence>
<protein>
    <recommendedName>
        <fullName>Uncharacterized methyltransferase Mb0229c</fullName>
        <ecNumber>2.1.1.-</ecNumber>
    </recommendedName>
</protein>
<accession>Q7U2J0</accession>
<accession>A0A1R3XUV7</accession>
<accession>X2BEA5</accession>
<evidence type="ECO:0000269" key="1">
    <source>
    </source>
</evidence>
<evidence type="ECO:0000305" key="2"/>
<feature type="chain" id="PRO_0000380598" description="Uncharacterized methyltransferase Mb0229c">
    <location>
        <begin position="1"/>
        <end position="254"/>
    </location>
</feature>